<accession>C5C7U8</accession>
<keyword id="KW-1185">Reference proteome</keyword>
<keyword id="KW-0687">Ribonucleoprotein</keyword>
<keyword id="KW-0689">Ribosomal protein</keyword>
<keyword id="KW-0694">RNA-binding</keyword>
<keyword id="KW-0699">rRNA-binding</keyword>
<reference key="1">
    <citation type="journal article" date="2010" name="J. Bacteriol.">
        <title>Genome sequence of the Fleming strain of Micrococcus luteus, a simple free-living actinobacterium.</title>
        <authorList>
            <person name="Young M."/>
            <person name="Artsatbanov V."/>
            <person name="Beller H.R."/>
            <person name="Chandra G."/>
            <person name="Chater K.F."/>
            <person name="Dover L.G."/>
            <person name="Goh E.B."/>
            <person name="Kahan T."/>
            <person name="Kaprelyants A.S."/>
            <person name="Kyrpides N."/>
            <person name="Lapidus A."/>
            <person name="Lowry S.R."/>
            <person name="Lykidis A."/>
            <person name="Mahillon J."/>
            <person name="Markowitz V."/>
            <person name="Mavromatis K."/>
            <person name="Mukamolova G.V."/>
            <person name="Oren A."/>
            <person name="Rokem J.S."/>
            <person name="Smith M.C."/>
            <person name="Young D.I."/>
            <person name="Greenblatt C.L."/>
        </authorList>
    </citation>
    <scope>NUCLEOTIDE SEQUENCE [LARGE SCALE GENOMIC DNA]</scope>
    <source>
        <strain>ATCC 4698 / DSM 20030 / JCM 1464 / CCM 169 / CCUG 5858 / IAM 1056 / NBRC 3333 / NCIMB 9278 / NCTC 2665 / VKM Ac-2230</strain>
    </source>
</reference>
<comment type="function">
    <text evidence="1">Binds to the 23S rRNA.</text>
</comment>
<comment type="similarity">
    <text evidence="1">Belongs to the bacterial ribosomal protein bL9 family.</text>
</comment>
<name>RL9_MICLC</name>
<evidence type="ECO:0000255" key="1">
    <source>
        <dbReference type="HAMAP-Rule" id="MF_00503"/>
    </source>
</evidence>
<evidence type="ECO:0000305" key="2"/>
<organism>
    <name type="scientific">Micrococcus luteus (strain ATCC 4698 / DSM 20030 / JCM 1464 / CCM 169 / CCUG 5858 / IAM 1056 / NBRC 3333 / NCIMB 9278 / NCTC 2665 / VKM Ac-2230)</name>
    <name type="common">Micrococcus lysodeikticus</name>
    <dbReference type="NCBI Taxonomy" id="465515"/>
    <lineage>
        <taxon>Bacteria</taxon>
        <taxon>Bacillati</taxon>
        <taxon>Actinomycetota</taxon>
        <taxon>Actinomycetes</taxon>
        <taxon>Micrococcales</taxon>
        <taxon>Micrococcaceae</taxon>
        <taxon>Micrococcus</taxon>
    </lineage>
</organism>
<feature type="chain" id="PRO_1000206556" description="Large ribosomal subunit protein bL9">
    <location>
        <begin position="1"/>
        <end position="153"/>
    </location>
</feature>
<gene>
    <name evidence="1" type="primary">rplI</name>
    <name type="ordered locus">Mlut_23230</name>
</gene>
<dbReference type="EMBL" id="CP001628">
    <property type="protein sequence ID" value="ACS31786.1"/>
    <property type="molecule type" value="Genomic_DNA"/>
</dbReference>
<dbReference type="RefSeq" id="WP_010079796.1">
    <property type="nucleotide sequence ID" value="NC_012803.1"/>
</dbReference>
<dbReference type="SMR" id="C5C7U8"/>
<dbReference type="STRING" id="465515.Mlut_23230"/>
<dbReference type="EnsemblBacteria" id="ACS31786">
    <property type="protein sequence ID" value="ACS31786"/>
    <property type="gene ID" value="Mlut_23230"/>
</dbReference>
<dbReference type="GeneID" id="93344165"/>
<dbReference type="KEGG" id="mlu:Mlut_23230"/>
<dbReference type="PATRIC" id="fig|465515.4.peg.2249"/>
<dbReference type="eggNOG" id="COG0359">
    <property type="taxonomic scope" value="Bacteria"/>
</dbReference>
<dbReference type="HOGENOM" id="CLU_078938_5_1_11"/>
<dbReference type="Proteomes" id="UP000000738">
    <property type="component" value="Chromosome"/>
</dbReference>
<dbReference type="GO" id="GO:1990904">
    <property type="term" value="C:ribonucleoprotein complex"/>
    <property type="evidence" value="ECO:0007669"/>
    <property type="project" value="UniProtKB-KW"/>
</dbReference>
<dbReference type="GO" id="GO:0005840">
    <property type="term" value="C:ribosome"/>
    <property type="evidence" value="ECO:0007669"/>
    <property type="project" value="UniProtKB-KW"/>
</dbReference>
<dbReference type="GO" id="GO:0019843">
    <property type="term" value="F:rRNA binding"/>
    <property type="evidence" value="ECO:0007669"/>
    <property type="project" value="UniProtKB-UniRule"/>
</dbReference>
<dbReference type="GO" id="GO:0003735">
    <property type="term" value="F:structural constituent of ribosome"/>
    <property type="evidence" value="ECO:0007669"/>
    <property type="project" value="InterPro"/>
</dbReference>
<dbReference type="GO" id="GO:0006412">
    <property type="term" value="P:translation"/>
    <property type="evidence" value="ECO:0007669"/>
    <property type="project" value="UniProtKB-UniRule"/>
</dbReference>
<dbReference type="FunFam" id="3.40.5.10:FF:000003">
    <property type="entry name" value="50S ribosomal protein L9"/>
    <property type="match status" value="1"/>
</dbReference>
<dbReference type="Gene3D" id="3.10.430.100">
    <property type="entry name" value="Ribosomal protein L9, C-terminal domain"/>
    <property type="match status" value="1"/>
</dbReference>
<dbReference type="Gene3D" id="3.40.5.10">
    <property type="entry name" value="Ribosomal protein L9, N-terminal domain"/>
    <property type="match status" value="1"/>
</dbReference>
<dbReference type="HAMAP" id="MF_00503">
    <property type="entry name" value="Ribosomal_bL9"/>
    <property type="match status" value="1"/>
</dbReference>
<dbReference type="InterPro" id="IPR000244">
    <property type="entry name" value="Ribosomal_bL9"/>
</dbReference>
<dbReference type="InterPro" id="IPR009027">
    <property type="entry name" value="Ribosomal_bL9/RNase_H1_N"/>
</dbReference>
<dbReference type="InterPro" id="IPR020594">
    <property type="entry name" value="Ribosomal_bL9_bac/chp"/>
</dbReference>
<dbReference type="InterPro" id="IPR020069">
    <property type="entry name" value="Ribosomal_bL9_C"/>
</dbReference>
<dbReference type="InterPro" id="IPR036791">
    <property type="entry name" value="Ribosomal_bL9_C_sf"/>
</dbReference>
<dbReference type="InterPro" id="IPR020070">
    <property type="entry name" value="Ribosomal_bL9_N"/>
</dbReference>
<dbReference type="InterPro" id="IPR036935">
    <property type="entry name" value="Ribosomal_bL9_N_sf"/>
</dbReference>
<dbReference type="NCBIfam" id="TIGR00158">
    <property type="entry name" value="L9"/>
    <property type="match status" value="1"/>
</dbReference>
<dbReference type="PANTHER" id="PTHR21368">
    <property type="entry name" value="50S RIBOSOMAL PROTEIN L9"/>
    <property type="match status" value="1"/>
</dbReference>
<dbReference type="Pfam" id="PF03948">
    <property type="entry name" value="Ribosomal_L9_C"/>
    <property type="match status" value="1"/>
</dbReference>
<dbReference type="Pfam" id="PF01281">
    <property type="entry name" value="Ribosomal_L9_N"/>
    <property type="match status" value="1"/>
</dbReference>
<dbReference type="SUPFAM" id="SSF55658">
    <property type="entry name" value="L9 N-domain-like"/>
    <property type="match status" value="1"/>
</dbReference>
<dbReference type="SUPFAM" id="SSF55653">
    <property type="entry name" value="Ribosomal protein L9 C-domain"/>
    <property type="match status" value="1"/>
</dbReference>
<dbReference type="PROSITE" id="PS00651">
    <property type="entry name" value="RIBOSOMAL_L9"/>
    <property type="match status" value="1"/>
</dbReference>
<protein>
    <recommendedName>
        <fullName evidence="1">Large ribosomal subunit protein bL9</fullName>
    </recommendedName>
    <alternativeName>
        <fullName evidence="2">50S ribosomal protein L9</fullName>
    </alternativeName>
</protein>
<sequence length="153" mass="16078">MAKLILTQEVAGLGTSGDVVEVKNGYARNYLLPRGFATVWTKGGEKQVESLQKARAARAVANLEDAQAQAAQLQSAPVQLERTAGAEGRLFGAVQTADVAEAIEAAGLGSVDKRSITLPAHIKSVGNHEAQVRLHEDVIATVQLQVVAAKAKK</sequence>
<proteinExistence type="inferred from homology"/>